<organism>
    <name type="scientific">Brucella abortus biovar 1 (strain 9-941)</name>
    <dbReference type="NCBI Taxonomy" id="262698"/>
    <lineage>
        <taxon>Bacteria</taxon>
        <taxon>Pseudomonadati</taxon>
        <taxon>Pseudomonadota</taxon>
        <taxon>Alphaproteobacteria</taxon>
        <taxon>Hyphomicrobiales</taxon>
        <taxon>Brucellaceae</taxon>
        <taxon>Brucella/Ochrobactrum group</taxon>
        <taxon>Brucella</taxon>
    </lineage>
</organism>
<keyword id="KW-0030">Aminoacyl-tRNA synthetase</keyword>
<keyword id="KW-0067">ATP-binding</keyword>
<keyword id="KW-0963">Cytoplasm</keyword>
<keyword id="KW-0436">Ligase</keyword>
<keyword id="KW-0547">Nucleotide-binding</keyword>
<keyword id="KW-0648">Protein biosynthesis</keyword>
<comment type="function">
    <text evidence="1">Catalyzes the attachment of glutamate to tRNA(Glu) in a two-step reaction: glutamate is first activated by ATP to form Glu-AMP and then transferred to the acceptor end of tRNA(Glu).</text>
</comment>
<comment type="catalytic activity">
    <reaction evidence="1">
        <text>tRNA(Glu) + L-glutamate + ATP = L-glutamyl-tRNA(Glu) + AMP + diphosphate</text>
        <dbReference type="Rhea" id="RHEA:23540"/>
        <dbReference type="Rhea" id="RHEA-COMP:9663"/>
        <dbReference type="Rhea" id="RHEA-COMP:9680"/>
        <dbReference type="ChEBI" id="CHEBI:29985"/>
        <dbReference type="ChEBI" id="CHEBI:30616"/>
        <dbReference type="ChEBI" id="CHEBI:33019"/>
        <dbReference type="ChEBI" id="CHEBI:78442"/>
        <dbReference type="ChEBI" id="CHEBI:78520"/>
        <dbReference type="ChEBI" id="CHEBI:456215"/>
        <dbReference type="EC" id="6.1.1.17"/>
    </reaction>
</comment>
<comment type="subunit">
    <text evidence="1">Monomer.</text>
</comment>
<comment type="subcellular location">
    <subcellularLocation>
        <location evidence="1">Cytoplasm</location>
    </subcellularLocation>
</comment>
<comment type="similarity">
    <text evidence="1">Belongs to the class-I aminoacyl-tRNA synthetase family. Glutamate--tRNA ligase type 1 subfamily.</text>
</comment>
<protein>
    <recommendedName>
        <fullName evidence="1">Glutamate--tRNA ligase 2</fullName>
        <ecNumber evidence="1">6.1.1.17</ecNumber>
    </recommendedName>
    <alternativeName>
        <fullName evidence="1">Glutamyl-tRNA synthetase 2</fullName>
        <shortName evidence="1">GluRS 2</shortName>
    </alternativeName>
</protein>
<sequence>MSKPVITRFAPSPTGYLHIGGARTALFNWLYAKHCGGKMLLRIEDTDRERSTEAATAAILDGLTWLGLDWDGEAISQFERAPRHREVAEELVANGKAYYCYASPEELEEMREKARAEGRPPRYDGRWRDRDPSEAPAGVKPVIRIKAPRDGETVVHDAVQGDVRFPNKDLDDFIILRSDGTPTYMHAVVVDDHDMGVTHIIRGDDHLTNAARQTIIYNAMGWDVPQMSHIPLIHGADGAKLSKRHGALGVDAYRAIGYLPAALRNYLVRLGWSHGDDEIMSTEQMIEWFDVKDINKGAARFDFQKLEAINGLYMRSSDDQALFDALVAVLPEIEGGKELAEALDDKGRAQLLLAMPGLKERAKTLVELADGAKFIFASRPLALDEKAASLLNDEGRAVLKPVYPVLEAVGEWTAESLDAAIRAHAEAEGLKLGKIAQPLRAALTGRATSPGVFDVLVVLGREESLARIGDQIG</sequence>
<proteinExistence type="inferred from homology"/>
<feature type="chain" id="PRO_0000237344" description="Glutamate--tRNA ligase 2">
    <location>
        <begin position="1"/>
        <end position="473"/>
    </location>
</feature>
<feature type="region of interest" description="Disordered" evidence="2">
    <location>
        <begin position="113"/>
        <end position="136"/>
    </location>
</feature>
<feature type="short sequence motif" description="'HIGH' region" evidence="1">
    <location>
        <begin position="11"/>
        <end position="21"/>
    </location>
</feature>
<feature type="short sequence motif" description="'KMSKS' region" evidence="1">
    <location>
        <begin position="240"/>
        <end position="244"/>
    </location>
</feature>
<feature type="compositionally biased region" description="Basic and acidic residues" evidence="2">
    <location>
        <begin position="113"/>
        <end position="133"/>
    </location>
</feature>
<feature type="binding site" evidence="1">
    <location>
        <position position="243"/>
    </location>
    <ligand>
        <name>ATP</name>
        <dbReference type="ChEBI" id="CHEBI:30616"/>
    </ligand>
</feature>
<gene>
    <name evidence="1" type="primary">gltX2</name>
    <name type="synonym">gltX-2</name>
    <name type="ordered locus">BruAb1_1153</name>
</gene>
<dbReference type="EC" id="6.1.1.17" evidence="1"/>
<dbReference type="EMBL" id="AE017223">
    <property type="protein sequence ID" value="AAX74492.1"/>
    <property type="molecule type" value="Genomic_DNA"/>
</dbReference>
<dbReference type="SMR" id="Q57CZ2"/>
<dbReference type="EnsemblBacteria" id="AAX74492">
    <property type="protein sequence ID" value="AAX74492"/>
    <property type="gene ID" value="BruAb1_1153"/>
</dbReference>
<dbReference type="KEGG" id="bmb:BruAb1_1153"/>
<dbReference type="HOGENOM" id="CLU_015768_6_3_5"/>
<dbReference type="Proteomes" id="UP000000540">
    <property type="component" value="Chromosome I"/>
</dbReference>
<dbReference type="GO" id="GO:0005829">
    <property type="term" value="C:cytosol"/>
    <property type="evidence" value="ECO:0007669"/>
    <property type="project" value="TreeGrafter"/>
</dbReference>
<dbReference type="GO" id="GO:0005524">
    <property type="term" value="F:ATP binding"/>
    <property type="evidence" value="ECO:0007669"/>
    <property type="project" value="UniProtKB-UniRule"/>
</dbReference>
<dbReference type="GO" id="GO:0004818">
    <property type="term" value="F:glutamate-tRNA ligase activity"/>
    <property type="evidence" value="ECO:0007669"/>
    <property type="project" value="UniProtKB-UniRule"/>
</dbReference>
<dbReference type="GO" id="GO:0000049">
    <property type="term" value="F:tRNA binding"/>
    <property type="evidence" value="ECO:0007669"/>
    <property type="project" value="InterPro"/>
</dbReference>
<dbReference type="GO" id="GO:0008270">
    <property type="term" value="F:zinc ion binding"/>
    <property type="evidence" value="ECO:0007669"/>
    <property type="project" value="InterPro"/>
</dbReference>
<dbReference type="GO" id="GO:0006424">
    <property type="term" value="P:glutamyl-tRNA aminoacylation"/>
    <property type="evidence" value="ECO:0007669"/>
    <property type="project" value="UniProtKB-UniRule"/>
</dbReference>
<dbReference type="CDD" id="cd00808">
    <property type="entry name" value="GluRS_core"/>
    <property type="match status" value="1"/>
</dbReference>
<dbReference type="FunFam" id="3.40.50.620:FF:000007">
    <property type="entry name" value="Glutamate--tRNA ligase"/>
    <property type="match status" value="1"/>
</dbReference>
<dbReference type="Gene3D" id="1.10.10.350">
    <property type="match status" value="1"/>
</dbReference>
<dbReference type="Gene3D" id="3.40.50.620">
    <property type="entry name" value="HUPs"/>
    <property type="match status" value="1"/>
</dbReference>
<dbReference type="HAMAP" id="MF_00022">
    <property type="entry name" value="Glu_tRNA_synth_type1"/>
    <property type="match status" value="1"/>
</dbReference>
<dbReference type="InterPro" id="IPR045462">
    <property type="entry name" value="aa-tRNA-synth_I_cd-bd"/>
</dbReference>
<dbReference type="InterPro" id="IPR020751">
    <property type="entry name" value="aa-tRNA-synth_I_codon-bd_sub2"/>
</dbReference>
<dbReference type="InterPro" id="IPR001412">
    <property type="entry name" value="aa-tRNA-synth_I_CS"/>
</dbReference>
<dbReference type="InterPro" id="IPR008925">
    <property type="entry name" value="aa_tRNA-synth_I_cd-bd_sf"/>
</dbReference>
<dbReference type="InterPro" id="IPR004527">
    <property type="entry name" value="Glu-tRNA-ligase_bac/mito"/>
</dbReference>
<dbReference type="InterPro" id="IPR000924">
    <property type="entry name" value="Glu/Gln-tRNA-synth"/>
</dbReference>
<dbReference type="InterPro" id="IPR020058">
    <property type="entry name" value="Glu/Gln-tRNA-synth_Ib_cat-dom"/>
</dbReference>
<dbReference type="InterPro" id="IPR049940">
    <property type="entry name" value="GluQ/Sye"/>
</dbReference>
<dbReference type="InterPro" id="IPR033910">
    <property type="entry name" value="GluRS_core"/>
</dbReference>
<dbReference type="InterPro" id="IPR014729">
    <property type="entry name" value="Rossmann-like_a/b/a_fold"/>
</dbReference>
<dbReference type="NCBIfam" id="TIGR00464">
    <property type="entry name" value="gltX_bact"/>
    <property type="match status" value="1"/>
</dbReference>
<dbReference type="PANTHER" id="PTHR43311">
    <property type="entry name" value="GLUTAMATE--TRNA LIGASE"/>
    <property type="match status" value="1"/>
</dbReference>
<dbReference type="PANTHER" id="PTHR43311:SF2">
    <property type="entry name" value="GLUTAMATE--TRNA LIGASE, MITOCHONDRIAL-RELATED"/>
    <property type="match status" value="1"/>
</dbReference>
<dbReference type="Pfam" id="PF19269">
    <property type="entry name" value="Anticodon_2"/>
    <property type="match status" value="1"/>
</dbReference>
<dbReference type="Pfam" id="PF00749">
    <property type="entry name" value="tRNA-synt_1c"/>
    <property type="match status" value="1"/>
</dbReference>
<dbReference type="PRINTS" id="PR00987">
    <property type="entry name" value="TRNASYNTHGLU"/>
</dbReference>
<dbReference type="SUPFAM" id="SSF48163">
    <property type="entry name" value="An anticodon-binding domain of class I aminoacyl-tRNA synthetases"/>
    <property type="match status" value="1"/>
</dbReference>
<dbReference type="SUPFAM" id="SSF52374">
    <property type="entry name" value="Nucleotidylyl transferase"/>
    <property type="match status" value="1"/>
</dbReference>
<dbReference type="PROSITE" id="PS00178">
    <property type="entry name" value="AA_TRNA_LIGASE_I"/>
    <property type="match status" value="1"/>
</dbReference>
<name>SYE2_BRUAB</name>
<accession>Q57CZ2</accession>
<reference key="1">
    <citation type="journal article" date="2005" name="J. Bacteriol.">
        <title>Completion of the genome sequence of Brucella abortus and comparison to the highly similar genomes of Brucella melitensis and Brucella suis.</title>
        <authorList>
            <person name="Halling S.M."/>
            <person name="Peterson-Burch B.D."/>
            <person name="Bricker B.J."/>
            <person name="Zuerner R.L."/>
            <person name="Qing Z."/>
            <person name="Li L.-L."/>
            <person name="Kapur V."/>
            <person name="Alt D.P."/>
            <person name="Olsen S.C."/>
        </authorList>
    </citation>
    <scope>NUCLEOTIDE SEQUENCE [LARGE SCALE GENOMIC DNA]</scope>
    <source>
        <strain>9-941</strain>
    </source>
</reference>
<evidence type="ECO:0000255" key="1">
    <source>
        <dbReference type="HAMAP-Rule" id="MF_00022"/>
    </source>
</evidence>
<evidence type="ECO:0000256" key="2">
    <source>
        <dbReference type="SAM" id="MobiDB-lite"/>
    </source>
</evidence>